<keyword id="KW-0256">Endoplasmic reticulum</keyword>
<keyword id="KW-0325">Glycoprotein</keyword>
<keyword id="KW-0328">Glycosyltransferase</keyword>
<keyword id="KW-0460">Magnesium</keyword>
<keyword id="KW-0472">Membrane</keyword>
<keyword id="KW-0479">Metal-binding</keyword>
<keyword id="KW-1185">Reference proteome</keyword>
<keyword id="KW-0808">Transferase</keyword>
<keyword id="KW-0812">Transmembrane</keyword>
<keyword id="KW-1133">Transmembrane helix</keyword>
<feature type="chain" id="PRO_0000108764" description="UDP-N-acetylglucosamine--dolichyl-phosphate N-acetylglucosaminephosphotransferase">
    <location>
        <begin position="1"/>
        <end position="446"/>
    </location>
</feature>
<feature type="transmembrane region" description="Helical" evidence="4">
    <location>
        <begin position="1"/>
        <end position="21"/>
    </location>
</feature>
<feature type="transmembrane region" description="Helical" evidence="4">
    <location>
        <begin position="25"/>
        <end position="45"/>
    </location>
</feature>
<feature type="transmembrane region" description="Helical" evidence="4">
    <location>
        <begin position="73"/>
        <end position="93"/>
    </location>
</feature>
<feature type="transmembrane region" description="Helical" evidence="4">
    <location>
        <begin position="123"/>
        <end position="143"/>
    </location>
</feature>
<feature type="transmembrane region" description="Helical" evidence="4">
    <location>
        <begin position="155"/>
        <end position="175"/>
    </location>
</feature>
<feature type="transmembrane region" description="Helical" evidence="4">
    <location>
        <begin position="191"/>
        <end position="211"/>
    </location>
</feature>
<feature type="transmembrane region" description="Helical" evidence="4">
    <location>
        <begin position="216"/>
        <end position="236"/>
    </location>
</feature>
<feature type="transmembrane region" description="Helical" evidence="4">
    <location>
        <begin position="254"/>
        <end position="274"/>
    </location>
</feature>
<feature type="transmembrane region" description="Helical" evidence="4">
    <location>
        <begin position="282"/>
        <end position="302"/>
    </location>
</feature>
<feature type="transmembrane region" description="Helical" evidence="4">
    <location>
        <begin position="311"/>
        <end position="331"/>
    </location>
</feature>
<feature type="transmembrane region" description="Helical" evidence="4">
    <location>
        <begin position="412"/>
        <end position="432"/>
    </location>
</feature>
<feature type="binding site" evidence="3">
    <location>
        <begin position="59"/>
        <end position="61"/>
    </location>
    <ligand>
        <name>UDP-N-acetyl-alpha-D-glucosamine</name>
        <dbReference type="ChEBI" id="CHEBI:57705"/>
    </ligand>
</feature>
<feature type="binding site" evidence="3">
    <location>
        <position position="71"/>
    </location>
    <ligand>
        <name>UDP-N-acetyl-alpha-D-glucosamine</name>
        <dbReference type="ChEBI" id="CHEBI:57705"/>
    </ligand>
</feature>
<feature type="binding site" evidence="3">
    <location>
        <position position="154"/>
    </location>
    <ligand>
        <name>dolichyl phosphate</name>
        <dbReference type="ChEBI" id="CHEBI:57683"/>
    </ligand>
</feature>
<feature type="binding site" evidence="3">
    <location>
        <begin position="208"/>
        <end position="216"/>
    </location>
    <ligand>
        <name>dolichyl phosphate</name>
        <dbReference type="ChEBI" id="CHEBI:57683"/>
    </ligand>
</feature>
<feature type="binding site" evidence="3">
    <location>
        <position position="215"/>
    </location>
    <ligand>
        <name>Mg(2+)</name>
        <dbReference type="ChEBI" id="CHEBI:18420"/>
    </ligand>
</feature>
<feature type="binding site" evidence="3">
    <location>
        <position position="221"/>
    </location>
    <ligand>
        <name>UDP-N-acetyl-alpha-D-glucosamine</name>
        <dbReference type="ChEBI" id="CHEBI:57705"/>
    </ligand>
</feature>
<feature type="binding site" evidence="3">
    <location>
        <position position="286"/>
    </location>
    <ligand>
        <name>Mg(2+)</name>
        <dbReference type="ChEBI" id="CHEBI:18420"/>
    </ligand>
</feature>
<feature type="binding site" evidence="3">
    <location>
        <begin position="335"/>
        <end position="337"/>
    </location>
    <ligand>
        <name>UDP-N-acetyl-alpha-D-glucosamine</name>
        <dbReference type="ChEBI" id="CHEBI:57705"/>
    </ligand>
</feature>
<feature type="glycosylation site" description="N-linked (GlcNAc...) asparagine" evidence="4">
    <location>
        <position position="395"/>
    </location>
</feature>
<comment type="function">
    <text evidence="5">UDP-N-acetylglucosamine--dolichyl-phosphate N-acetylglucosaminephosphotransferase that operates in the biosynthetic pathway of dolichol-linked oligosaccharides, the glycan precursors employed in protein asparagine (N)-glycosylation. The assembly of dolichol-linked oligosaccharides begins on the cytosolic side of the endoplasmic reticulum membrane and finishes in its lumen. The sequential addition of sugars to dolichol pyrophosphate produces dolichol-linked oligosaccharides containing fourteen sugars, including two GlcNAcs, nine mannoses and three glucoses. Once assembled, the oligosaccharide is transferred from the lipid to nascent proteins by oligosaccharyltransferases. Catalyzes the initial step of dolichol-linked oligosaccharide biosynthesis, transfering GlcNAc-1-P from cytosolic UDP-GlcNAc onto the carrier lipid dolichyl phosphate (P-dolichol), yielding GlcNAc-P-P-dolichol embedded in the cytoplasmic leaflet of the endoplasmic reticulum membrane.</text>
</comment>
<comment type="catalytic activity">
    <reaction evidence="5">
        <text>a di-trans,poly-cis-dolichyl phosphate + UDP-N-acetyl-alpha-D-glucosamine = an N-acetyl-alpha-D-glucosaminyl-diphospho-di-trans,poly-cis-dolichol + UMP</text>
        <dbReference type="Rhea" id="RHEA:13289"/>
        <dbReference type="Rhea" id="RHEA-COMP:19498"/>
        <dbReference type="Rhea" id="RHEA-COMP:19507"/>
        <dbReference type="ChEBI" id="CHEBI:57683"/>
        <dbReference type="ChEBI" id="CHEBI:57705"/>
        <dbReference type="ChEBI" id="CHEBI:57865"/>
        <dbReference type="ChEBI" id="CHEBI:58427"/>
        <dbReference type="EC" id="2.7.8.15"/>
    </reaction>
    <physiologicalReaction direction="left-to-right" evidence="7">
        <dbReference type="Rhea" id="RHEA:13290"/>
    </physiologicalReaction>
</comment>
<comment type="cofactor">
    <cofactor evidence="3">
        <name>Mg(2+)</name>
        <dbReference type="ChEBI" id="CHEBI:18420"/>
    </cofactor>
</comment>
<comment type="activity regulation">
    <text evidence="5">Inhibited by natural nucleoside antibiotic tunicamycin, which acts as a structural analog and competitor of UDP-GlcNAc.</text>
</comment>
<comment type="pathway">
    <text evidence="1">Protein modification; protein glycosylation.</text>
</comment>
<comment type="subcellular location">
    <subcellularLocation>
        <location evidence="2">Endoplasmic reticulum membrane</location>
        <topology evidence="3">Multi-pass membrane protein</topology>
    </subcellularLocation>
</comment>
<comment type="similarity">
    <text evidence="6">Belongs to the glycosyltransferase 4 family.</text>
</comment>
<dbReference type="EC" id="2.7.8.15"/>
<dbReference type="EMBL" id="U09454">
    <property type="protein sequence ID" value="AAA92799.1"/>
    <property type="molecule type" value="Genomic_DNA"/>
</dbReference>
<dbReference type="EMBL" id="CU329671">
    <property type="protein sequence ID" value="CAA20479.1"/>
    <property type="molecule type" value="Genomic_DNA"/>
</dbReference>
<dbReference type="PIR" id="S71622">
    <property type="entry name" value="S71622"/>
</dbReference>
<dbReference type="RefSeq" id="NP_596244.1">
    <property type="nucleotide sequence ID" value="NM_001022163.2"/>
</dbReference>
<dbReference type="SMR" id="P42881"/>
<dbReference type="BioGRID" id="276345">
    <property type="interactions" value="1"/>
</dbReference>
<dbReference type="FunCoup" id="P42881">
    <property type="interactions" value="275"/>
</dbReference>
<dbReference type="STRING" id="284812.P42881"/>
<dbReference type="GlyCosmos" id="P42881">
    <property type="glycosylation" value="1 site, No reported glycans"/>
</dbReference>
<dbReference type="iPTMnet" id="P42881"/>
<dbReference type="PaxDb" id="4896-SPBC15D4.04.1"/>
<dbReference type="EnsemblFungi" id="SPBC15D4.04.1">
    <property type="protein sequence ID" value="SPBC15D4.04.1:pep"/>
    <property type="gene ID" value="SPBC15D4.04"/>
</dbReference>
<dbReference type="GeneID" id="2539795"/>
<dbReference type="KEGG" id="spo:2539795"/>
<dbReference type="PomBase" id="SPBC15D4.04">
    <property type="gene designation" value="gpt2"/>
</dbReference>
<dbReference type="VEuPathDB" id="FungiDB:SPBC15D4.04"/>
<dbReference type="eggNOG" id="KOG2788">
    <property type="taxonomic scope" value="Eukaryota"/>
</dbReference>
<dbReference type="HOGENOM" id="CLU_029942_1_0_1"/>
<dbReference type="InParanoid" id="P42881"/>
<dbReference type="OMA" id="LPHFNAR"/>
<dbReference type="PhylomeDB" id="P42881"/>
<dbReference type="Reactome" id="R-SPO-446193">
    <property type="pathway name" value="Biosynthesis of the N-glycan precursor (dolichol lipid-linked oligosaccharide, LLO) and transfer to a nascent protein"/>
</dbReference>
<dbReference type="UniPathway" id="UPA00378"/>
<dbReference type="PRO" id="PR:P42881"/>
<dbReference type="Proteomes" id="UP000002485">
    <property type="component" value="Chromosome II"/>
</dbReference>
<dbReference type="GO" id="GO:0005783">
    <property type="term" value="C:endoplasmic reticulum"/>
    <property type="evidence" value="ECO:0000316"/>
    <property type="project" value="PomBase"/>
</dbReference>
<dbReference type="GO" id="GO:0016020">
    <property type="term" value="C:membrane"/>
    <property type="evidence" value="ECO:0000269"/>
    <property type="project" value="PomBase"/>
</dbReference>
<dbReference type="GO" id="GO:0043541">
    <property type="term" value="C:UDP-N-acetylglucosamine transferase complex"/>
    <property type="evidence" value="ECO:0000266"/>
    <property type="project" value="PomBase"/>
</dbReference>
<dbReference type="GO" id="GO:0016757">
    <property type="term" value="F:glycosyltransferase activity"/>
    <property type="evidence" value="ECO:0007669"/>
    <property type="project" value="UniProtKB-KW"/>
</dbReference>
<dbReference type="GO" id="GO:0046872">
    <property type="term" value="F:metal ion binding"/>
    <property type="evidence" value="ECO:0007669"/>
    <property type="project" value="UniProtKB-KW"/>
</dbReference>
<dbReference type="GO" id="GO:0003975">
    <property type="term" value="F:UDP-N-acetylglucosamine-dolichyl-phosphate N-acetylglucosaminephosphotransferase activity"/>
    <property type="evidence" value="ECO:0000315"/>
    <property type="project" value="PomBase"/>
</dbReference>
<dbReference type="GO" id="GO:0006488">
    <property type="term" value="P:dolichol-linked oligosaccharide biosynthetic process"/>
    <property type="evidence" value="ECO:0000315"/>
    <property type="project" value="PomBase"/>
</dbReference>
<dbReference type="CDD" id="cd06855">
    <property type="entry name" value="GT_GPT_euk"/>
    <property type="match status" value="1"/>
</dbReference>
<dbReference type="InterPro" id="IPR000715">
    <property type="entry name" value="Glycosyl_transferase_4"/>
</dbReference>
<dbReference type="InterPro" id="IPR033895">
    <property type="entry name" value="GPT"/>
</dbReference>
<dbReference type="PANTHER" id="PTHR10571">
    <property type="entry name" value="UDP-N-ACETYLGLUCOSAMINE--DOLICHYL-PHOSPHATE N-ACETYLGLUCOSAMINEPHOSPHOTRANSFERASE"/>
    <property type="match status" value="1"/>
</dbReference>
<dbReference type="PANTHER" id="PTHR10571:SF0">
    <property type="entry name" value="UDP-N-ACETYLGLUCOSAMINE--DOLICHYL-PHOSPHATE N-ACETYLGLUCOSAMINEPHOSPHOTRANSFERASE"/>
    <property type="match status" value="1"/>
</dbReference>
<dbReference type="Pfam" id="PF00953">
    <property type="entry name" value="Glycos_transf_4"/>
    <property type="match status" value="1"/>
</dbReference>
<organism>
    <name type="scientific">Schizosaccharomyces pombe (strain 972 / ATCC 24843)</name>
    <name type="common">Fission yeast</name>
    <dbReference type="NCBI Taxonomy" id="284812"/>
    <lineage>
        <taxon>Eukaryota</taxon>
        <taxon>Fungi</taxon>
        <taxon>Dikarya</taxon>
        <taxon>Ascomycota</taxon>
        <taxon>Taphrinomycotina</taxon>
        <taxon>Schizosaccharomycetes</taxon>
        <taxon>Schizosaccharomycetales</taxon>
        <taxon>Schizosaccharomycetaceae</taxon>
        <taxon>Schizosaccharomyces</taxon>
    </lineage>
</organism>
<sequence>MIESCFNVGIWATGLALLMNQGQSPLLSNVGLSVLAYKATAMFIPRVGPSFIKRGFSGKDMNKVEKYVIPETMGAVSALVYFMCMIIFIPVLFYKYLVPNHNPNLPSDGSVAEVAKSQFPHDLLGAYLSALLSILSVSLLGILDDLFDIRWRHKFFLPAIAAIPLLVVYYVDYGVTYVSVPSIVRPFLKRSLINLGFLYYFYMAAVAIFCPNSINIIAGVNGVEAGQSLVLALVIACNDLFYVLSPKNKDALRAHLLSLYLVLPLIGVTAGLLKYNWWPSRVFVGDTFCYFAGMVMAVVGILGHFSKTLMLFFIPQIFNFALSVPQLFGLVECPRHRLPKLNVKTGLLENSYTEFSLNEHPLPKKTLLTISIFEKLRLIRVEYDPSTGRPLRCTNFTIINFVLYHLGPMREDHLTICIMGLQLLTGIFGLIIRHFVAPLVYPEDNI</sequence>
<accession>P42881</accession>
<name>GPT_SCHPO</name>
<protein>
    <recommendedName>
        <fullName>UDP-N-acetylglucosamine--dolichyl-phosphate N-acetylglucosaminephosphotransferase</fullName>
        <ecNumber>2.7.8.15</ecNumber>
    </recommendedName>
    <alternativeName>
        <fullName>GlcNAc-1-P transferase</fullName>
        <shortName>G1PT</shortName>
        <shortName>GPT</shortName>
    </alternativeName>
    <alternativeName>
        <fullName>N-acetylglucosamine-1-phosphate transferase</fullName>
    </alternativeName>
</protein>
<gene>
    <name type="primary">gpt2</name>
    <name type="synonym">gpt</name>
    <name type="ORF">SPBC15D4.04</name>
</gene>
<proteinExistence type="evidence at protein level"/>
<reference key="1">
    <citation type="journal article" date="1995" name="Arch. Biochem. Biophys.">
        <title>Asparagine-linked glycosylation in Schizosaccharomyces pombe: functional conservation of the first step in oligosaccharide-lipid assembly.</title>
        <authorList>
            <person name="Zou J."/>
            <person name="Scocca J.R."/>
            <person name="Krag S.S."/>
        </authorList>
    </citation>
    <scope>NUCLEOTIDE SEQUENCE [GENOMIC DNA]</scope>
    <scope>FUNCTION</scope>
    <scope>CATALYTIC ACTIVITY</scope>
    <scope>SUBCELLULAR LOCATION</scope>
    <scope>ACTIVITY REGULATION</scope>
    <source>
        <strain>972 / ATCC 24843</strain>
    </source>
</reference>
<reference key="2">
    <citation type="journal article" date="2002" name="Nature">
        <title>The genome sequence of Schizosaccharomyces pombe.</title>
        <authorList>
            <person name="Wood V."/>
            <person name="Gwilliam R."/>
            <person name="Rajandream M.A."/>
            <person name="Lyne M.H."/>
            <person name="Lyne R."/>
            <person name="Stewart A."/>
            <person name="Sgouros J.G."/>
            <person name="Peat N."/>
            <person name="Hayles J."/>
            <person name="Baker S.G."/>
            <person name="Basham D."/>
            <person name="Bowman S."/>
            <person name="Brooks K."/>
            <person name="Brown D."/>
            <person name="Brown S."/>
            <person name="Chillingworth T."/>
            <person name="Churcher C.M."/>
            <person name="Collins M."/>
            <person name="Connor R."/>
            <person name="Cronin A."/>
            <person name="Davis P."/>
            <person name="Feltwell T."/>
            <person name="Fraser A."/>
            <person name="Gentles S."/>
            <person name="Goble A."/>
            <person name="Hamlin N."/>
            <person name="Harris D.E."/>
            <person name="Hidalgo J."/>
            <person name="Hodgson G."/>
            <person name="Holroyd S."/>
            <person name="Hornsby T."/>
            <person name="Howarth S."/>
            <person name="Huckle E.J."/>
            <person name="Hunt S."/>
            <person name="Jagels K."/>
            <person name="James K.D."/>
            <person name="Jones L."/>
            <person name="Jones M."/>
            <person name="Leather S."/>
            <person name="McDonald S."/>
            <person name="McLean J."/>
            <person name="Mooney P."/>
            <person name="Moule S."/>
            <person name="Mungall K.L."/>
            <person name="Murphy L.D."/>
            <person name="Niblett D."/>
            <person name="Odell C."/>
            <person name="Oliver K."/>
            <person name="O'Neil S."/>
            <person name="Pearson D."/>
            <person name="Quail M.A."/>
            <person name="Rabbinowitsch E."/>
            <person name="Rutherford K.M."/>
            <person name="Rutter S."/>
            <person name="Saunders D."/>
            <person name="Seeger K."/>
            <person name="Sharp S."/>
            <person name="Skelton J."/>
            <person name="Simmonds M.N."/>
            <person name="Squares R."/>
            <person name="Squares S."/>
            <person name="Stevens K."/>
            <person name="Taylor K."/>
            <person name="Taylor R.G."/>
            <person name="Tivey A."/>
            <person name="Walsh S.V."/>
            <person name="Warren T."/>
            <person name="Whitehead S."/>
            <person name="Woodward J.R."/>
            <person name="Volckaert G."/>
            <person name="Aert R."/>
            <person name="Robben J."/>
            <person name="Grymonprez B."/>
            <person name="Weltjens I."/>
            <person name="Vanstreels E."/>
            <person name="Rieger M."/>
            <person name="Schaefer M."/>
            <person name="Mueller-Auer S."/>
            <person name="Gabel C."/>
            <person name="Fuchs M."/>
            <person name="Duesterhoeft A."/>
            <person name="Fritzc C."/>
            <person name="Holzer E."/>
            <person name="Moestl D."/>
            <person name="Hilbert H."/>
            <person name="Borzym K."/>
            <person name="Langer I."/>
            <person name="Beck A."/>
            <person name="Lehrach H."/>
            <person name="Reinhardt R."/>
            <person name="Pohl T.M."/>
            <person name="Eger P."/>
            <person name="Zimmermann W."/>
            <person name="Wedler H."/>
            <person name="Wambutt R."/>
            <person name="Purnelle B."/>
            <person name="Goffeau A."/>
            <person name="Cadieu E."/>
            <person name="Dreano S."/>
            <person name="Gloux S."/>
            <person name="Lelaure V."/>
            <person name="Mottier S."/>
            <person name="Galibert F."/>
            <person name="Aves S.J."/>
            <person name="Xiang Z."/>
            <person name="Hunt C."/>
            <person name="Moore K."/>
            <person name="Hurst S.M."/>
            <person name="Lucas M."/>
            <person name="Rochet M."/>
            <person name="Gaillardin C."/>
            <person name="Tallada V.A."/>
            <person name="Garzon A."/>
            <person name="Thode G."/>
            <person name="Daga R.R."/>
            <person name="Cruzado L."/>
            <person name="Jimenez J."/>
            <person name="Sanchez M."/>
            <person name="del Rey F."/>
            <person name="Benito J."/>
            <person name="Dominguez A."/>
            <person name="Revuelta J.L."/>
            <person name="Moreno S."/>
            <person name="Armstrong J."/>
            <person name="Forsburg S.L."/>
            <person name="Cerutti L."/>
            <person name="Lowe T."/>
            <person name="McCombie W.R."/>
            <person name="Paulsen I."/>
            <person name="Potashkin J."/>
            <person name="Shpakovski G.V."/>
            <person name="Ussery D."/>
            <person name="Barrell B.G."/>
            <person name="Nurse P."/>
        </authorList>
    </citation>
    <scope>NUCLEOTIDE SEQUENCE [LARGE SCALE GENOMIC DNA]</scope>
    <source>
        <strain>972 / ATCC 24843</strain>
    </source>
</reference>
<evidence type="ECO:0000250" key="1">
    <source>
        <dbReference type="UniProtKB" id="P07286"/>
    </source>
</evidence>
<evidence type="ECO:0000250" key="2">
    <source>
        <dbReference type="UniProtKB" id="P23338"/>
    </source>
</evidence>
<evidence type="ECO:0000250" key="3">
    <source>
        <dbReference type="UniProtKB" id="Q9H3H5"/>
    </source>
</evidence>
<evidence type="ECO:0000255" key="4"/>
<evidence type="ECO:0000269" key="5">
    <source>
    </source>
</evidence>
<evidence type="ECO:0000305" key="6"/>
<evidence type="ECO:0000305" key="7">
    <source>
    </source>
</evidence>